<proteinExistence type="inferred from homology"/>
<protein>
    <recommendedName>
        <fullName evidence="1">Large ribosomal subunit protein bL34</fullName>
    </recommendedName>
    <alternativeName>
        <fullName evidence="2">50S ribosomal protein L34</fullName>
    </alternativeName>
</protein>
<sequence>MSKRTYQPNNRRRARVHGFRTRMRTRAGRAIVSARRRKGRKSLTA</sequence>
<reference key="1">
    <citation type="journal article" date="2008" name="J. Biotechnol.">
        <title>The lifestyle of Corynebacterium urealyticum derived from its complete genome sequence established by pyrosequencing.</title>
        <authorList>
            <person name="Tauch A."/>
            <person name="Trost E."/>
            <person name="Tilker A."/>
            <person name="Ludewig U."/>
            <person name="Schneiker S."/>
            <person name="Goesmann A."/>
            <person name="Arnold W."/>
            <person name="Bekel T."/>
            <person name="Brinkrolf K."/>
            <person name="Brune I."/>
            <person name="Goetker S."/>
            <person name="Kalinowski J."/>
            <person name="Kamp P.-B."/>
            <person name="Lobo F.P."/>
            <person name="Viehoever P."/>
            <person name="Weisshaar B."/>
            <person name="Soriano F."/>
            <person name="Droege M."/>
            <person name="Puehler A."/>
        </authorList>
    </citation>
    <scope>NUCLEOTIDE SEQUENCE [LARGE SCALE GENOMIC DNA]</scope>
    <source>
        <strain>ATCC 43042 / DSM 7109</strain>
    </source>
</reference>
<keyword id="KW-1185">Reference proteome</keyword>
<keyword id="KW-0687">Ribonucleoprotein</keyword>
<keyword id="KW-0689">Ribosomal protein</keyword>
<dbReference type="EMBL" id="AM942444">
    <property type="protein sequence ID" value="CAQ05984.1"/>
    <property type="molecule type" value="Genomic_DNA"/>
</dbReference>
<dbReference type="RefSeq" id="WP_012361251.1">
    <property type="nucleotide sequence ID" value="NC_010545.1"/>
</dbReference>
<dbReference type="SMR" id="B1VJ38"/>
<dbReference type="STRING" id="504474.cu2027"/>
<dbReference type="GeneID" id="60604802"/>
<dbReference type="KEGG" id="cur:cu2027"/>
<dbReference type="eggNOG" id="COG0230">
    <property type="taxonomic scope" value="Bacteria"/>
</dbReference>
<dbReference type="HOGENOM" id="CLU_129938_2_1_11"/>
<dbReference type="Proteomes" id="UP000001727">
    <property type="component" value="Chromosome"/>
</dbReference>
<dbReference type="GO" id="GO:1990904">
    <property type="term" value="C:ribonucleoprotein complex"/>
    <property type="evidence" value="ECO:0007669"/>
    <property type="project" value="UniProtKB-KW"/>
</dbReference>
<dbReference type="GO" id="GO:0005840">
    <property type="term" value="C:ribosome"/>
    <property type="evidence" value="ECO:0007669"/>
    <property type="project" value="UniProtKB-KW"/>
</dbReference>
<dbReference type="GO" id="GO:0003735">
    <property type="term" value="F:structural constituent of ribosome"/>
    <property type="evidence" value="ECO:0007669"/>
    <property type="project" value="InterPro"/>
</dbReference>
<dbReference type="GO" id="GO:0006412">
    <property type="term" value="P:translation"/>
    <property type="evidence" value="ECO:0007669"/>
    <property type="project" value="UniProtKB-UniRule"/>
</dbReference>
<dbReference type="FunFam" id="1.10.287.3980:FF:000001">
    <property type="entry name" value="Mitochondrial ribosomal protein L34"/>
    <property type="match status" value="1"/>
</dbReference>
<dbReference type="Gene3D" id="1.10.287.3980">
    <property type="match status" value="1"/>
</dbReference>
<dbReference type="HAMAP" id="MF_00391">
    <property type="entry name" value="Ribosomal_bL34"/>
    <property type="match status" value="1"/>
</dbReference>
<dbReference type="InterPro" id="IPR000271">
    <property type="entry name" value="Ribosomal_bL34"/>
</dbReference>
<dbReference type="InterPro" id="IPR020939">
    <property type="entry name" value="Ribosomal_bL34_CS"/>
</dbReference>
<dbReference type="NCBIfam" id="TIGR01030">
    <property type="entry name" value="rpmH_bact"/>
    <property type="match status" value="1"/>
</dbReference>
<dbReference type="PANTHER" id="PTHR14503:SF4">
    <property type="entry name" value="LARGE RIBOSOMAL SUBUNIT PROTEIN BL34M"/>
    <property type="match status" value="1"/>
</dbReference>
<dbReference type="PANTHER" id="PTHR14503">
    <property type="entry name" value="MITOCHONDRIAL RIBOSOMAL PROTEIN 34 FAMILY MEMBER"/>
    <property type="match status" value="1"/>
</dbReference>
<dbReference type="Pfam" id="PF00468">
    <property type="entry name" value="Ribosomal_L34"/>
    <property type="match status" value="1"/>
</dbReference>
<dbReference type="PROSITE" id="PS00784">
    <property type="entry name" value="RIBOSOMAL_L34"/>
    <property type="match status" value="1"/>
</dbReference>
<evidence type="ECO:0000255" key="1">
    <source>
        <dbReference type="HAMAP-Rule" id="MF_00391"/>
    </source>
</evidence>
<evidence type="ECO:0000305" key="2"/>
<gene>
    <name evidence="1" type="primary">rpmH</name>
    <name type="ordered locus">cu2027</name>
</gene>
<accession>B1VJ38</accession>
<organism>
    <name type="scientific">Corynebacterium urealyticum (strain ATCC 43042 / DSM 7109)</name>
    <dbReference type="NCBI Taxonomy" id="504474"/>
    <lineage>
        <taxon>Bacteria</taxon>
        <taxon>Bacillati</taxon>
        <taxon>Actinomycetota</taxon>
        <taxon>Actinomycetes</taxon>
        <taxon>Mycobacteriales</taxon>
        <taxon>Corynebacteriaceae</taxon>
        <taxon>Corynebacterium</taxon>
    </lineage>
</organism>
<name>RL34_CORU7</name>
<feature type="chain" id="PRO_1000196028" description="Large ribosomal subunit protein bL34">
    <location>
        <begin position="1"/>
        <end position="45"/>
    </location>
</feature>
<comment type="similarity">
    <text evidence="1">Belongs to the bacterial ribosomal protein bL34 family.</text>
</comment>